<feature type="chain" id="PRO_0000123072" description="dTTP/UTP pyrophosphatase">
    <location>
        <begin position="1"/>
        <end position="186"/>
    </location>
</feature>
<feature type="active site" description="Proton acceptor" evidence="1">
    <location>
        <position position="70"/>
    </location>
</feature>
<feature type="site" description="Important for substrate specificity" evidence="1">
    <location>
        <position position="12"/>
    </location>
</feature>
<feature type="site" description="Important for substrate specificity" evidence="1">
    <location>
        <position position="71"/>
    </location>
</feature>
<feature type="site" description="Important for substrate specificity" evidence="1">
    <location>
        <position position="153"/>
    </location>
</feature>
<organism>
    <name type="scientific">Vibrio vulnificus (strain CMCP6)</name>
    <dbReference type="NCBI Taxonomy" id="216895"/>
    <lineage>
        <taxon>Bacteria</taxon>
        <taxon>Pseudomonadati</taxon>
        <taxon>Pseudomonadota</taxon>
        <taxon>Gammaproteobacteria</taxon>
        <taxon>Vibrionales</taxon>
        <taxon>Vibrionaceae</taxon>
        <taxon>Vibrio</taxon>
    </lineage>
</organism>
<sequence length="186" mass="20649">MHKLVLASGSPRRKELLAQLGYTFDVVLPDIEECKAEQETAAEYVLRLSQQKAQAGLALVSESSIVVGSDTVVVCDGQVLEKPHHFADAQRMLTQLSDRRHQVMTAVTVVSAEKQHSIVVTTEVWFKKLTQEEIEQYWQSGEPCDKAGSYGIQGLGGRFVTRIEGSYSAVVGLPLYETDQLLHEFI</sequence>
<keyword id="KW-0963">Cytoplasm</keyword>
<keyword id="KW-0378">Hydrolase</keyword>
<keyword id="KW-0546">Nucleotide metabolism</keyword>
<name>NTPPA_VIBVU</name>
<evidence type="ECO:0000255" key="1">
    <source>
        <dbReference type="HAMAP-Rule" id="MF_00528"/>
    </source>
</evidence>
<proteinExistence type="inferred from homology"/>
<accession>Q8DCG8</accession>
<comment type="function">
    <text evidence="1">Nucleoside triphosphate pyrophosphatase that hydrolyzes dTTP and UTP. May have a dual role in cell division arrest and in preventing the incorporation of modified nucleotides into cellular nucleic acids.</text>
</comment>
<comment type="catalytic activity">
    <reaction evidence="1">
        <text>dTTP + H2O = dTMP + diphosphate + H(+)</text>
        <dbReference type="Rhea" id="RHEA:28534"/>
        <dbReference type="ChEBI" id="CHEBI:15377"/>
        <dbReference type="ChEBI" id="CHEBI:15378"/>
        <dbReference type="ChEBI" id="CHEBI:33019"/>
        <dbReference type="ChEBI" id="CHEBI:37568"/>
        <dbReference type="ChEBI" id="CHEBI:63528"/>
        <dbReference type="EC" id="3.6.1.9"/>
    </reaction>
</comment>
<comment type="catalytic activity">
    <reaction evidence="1">
        <text>UTP + H2O = UMP + diphosphate + H(+)</text>
        <dbReference type="Rhea" id="RHEA:29395"/>
        <dbReference type="ChEBI" id="CHEBI:15377"/>
        <dbReference type="ChEBI" id="CHEBI:15378"/>
        <dbReference type="ChEBI" id="CHEBI:33019"/>
        <dbReference type="ChEBI" id="CHEBI:46398"/>
        <dbReference type="ChEBI" id="CHEBI:57865"/>
        <dbReference type="EC" id="3.6.1.9"/>
    </reaction>
</comment>
<comment type="cofactor">
    <cofactor evidence="1">
        <name>a divalent metal cation</name>
        <dbReference type="ChEBI" id="CHEBI:60240"/>
    </cofactor>
</comment>
<comment type="subcellular location">
    <subcellularLocation>
        <location evidence="1">Cytoplasm</location>
    </subcellularLocation>
</comment>
<comment type="similarity">
    <text evidence="1">Belongs to the Maf family. YhdE subfamily.</text>
</comment>
<protein>
    <recommendedName>
        <fullName evidence="1">dTTP/UTP pyrophosphatase</fullName>
        <shortName evidence="1">dTTPase/UTPase</shortName>
        <ecNumber evidence="1">3.6.1.9</ecNumber>
    </recommendedName>
    <alternativeName>
        <fullName evidence="1">Nucleoside triphosphate pyrophosphatase</fullName>
    </alternativeName>
    <alternativeName>
        <fullName evidence="1">Nucleotide pyrophosphatase</fullName>
        <shortName evidence="1">Nucleotide PPase</shortName>
    </alternativeName>
</protein>
<gene>
    <name type="ordered locus">VV1_1452</name>
</gene>
<reference key="1">
    <citation type="submission" date="2002-12" db="EMBL/GenBank/DDBJ databases">
        <title>Complete genome sequence of Vibrio vulnificus CMCP6.</title>
        <authorList>
            <person name="Rhee J.H."/>
            <person name="Kim S.Y."/>
            <person name="Chung S.S."/>
            <person name="Kim J.J."/>
            <person name="Moon Y.H."/>
            <person name="Jeong H."/>
            <person name="Choy H.E."/>
        </authorList>
    </citation>
    <scope>NUCLEOTIDE SEQUENCE [LARGE SCALE GENOMIC DNA]</scope>
    <source>
        <strain>CMCP6</strain>
    </source>
</reference>
<dbReference type="EC" id="3.6.1.9" evidence="1"/>
<dbReference type="EMBL" id="AE016795">
    <property type="protein sequence ID" value="AAO09892.1"/>
    <property type="molecule type" value="Genomic_DNA"/>
</dbReference>
<dbReference type="RefSeq" id="WP_011079410.1">
    <property type="nucleotide sequence ID" value="NC_004459.3"/>
</dbReference>
<dbReference type="SMR" id="Q8DCG8"/>
<dbReference type="KEGG" id="vvu:VV1_1452"/>
<dbReference type="HOGENOM" id="CLU_040416_2_1_6"/>
<dbReference type="Proteomes" id="UP000002275">
    <property type="component" value="Chromosome 1"/>
</dbReference>
<dbReference type="GO" id="GO:0005737">
    <property type="term" value="C:cytoplasm"/>
    <property type="evidence" value="ECO:0007669"/>
    <property type="project" value="UniProtKB-SubCell"/>
</dbReference>
<dbReference type="GO" id="GO:0036218">
    <property type="term" value="F:dTTP diphosphatase activity"/>
    <property type="evidence" value="ECO:0007669"/>
    <property type="project" value="RHEA"/>
</dbReference>
<dbReference type="GO" id="GO:0036221">
    <property type="term" value="F:UTP diphosphatase activity"/>
    <property type="evidence" value="ECO:0007669"/>
    <property type="project" value="RHEA"/>
</dbReference>
<dbReference type="GO" id="GO:0009117">
    <property type="term" value="P:nucleotide metabolic process"/>
    <property type="evidence" value="ECO:0007669"/>
    <property type="project" value="UniProtKB-KW"/>
</dbReference>
<dbReference type="CDD" id="cd00555">
    <property type="entry name" value="Maf"/>
    <property type="match status" value="1"/>
</dbReference>
<dbReference type="FunFam" id="3.90.950.10:FF:000004">
    <property type="entry name" value="dTTP/UTP pyrophosphatase"/>
    <property type="match status" value="1"/>
</dbReference>
<dbReference type="Gene3D" id="3.90.950.10">
    <property type="match status" value="1"/>
</dbReference>
<dbReference type="HAMAP" id="MF_00528">
    <property type="entry name" value="Maf"/>
    <property type="match status" value="1"/>
</dbReference>
<dbReference type="InterPro" id="IPR029001">
    <property type="entry name" value="ITPase-like_fam"/>
</dbReference>
<dbReference type="InterPro" id="IPR003697">
    <property type="entry name" value="Maf-like"/>
</dbReference>
<dbReference type="NCBIfam" id="TIGR00172">
    <property type="entry name" value="maf"/>
    <property type="match status" value="1"/>
</dbReference>
<dbReference type="PANTHER" id="PTHR43213">
    <property type="entry name" value="BIFUNCTIONAL DTTP/UTP PYROPHOSPHATASE/METHYLTRANSFERASE PROTEIN-RELATED"/>
    <property type="match status" value="1"/>
</dbReference>
<dbReference type="PANTHER" id="PTHR43213:SF5">
    <property type="entry name" value="BIFUNCTIONAL DTTP_UTP PYROPHOSPHATASE_METHYLTRANSFERASE PROTEIN-RELATED"/>
    <property type="match status" value="1"/>
</dbReference>
<dbReference type="Pfam" id="PF02545">
    <property type="entry name" value="Maf"/>
    <property type="match status" value="1"/>
</dbReference>
<dbReference type="PIRSF" id="PIRSF006305">
    <property type="entry name" value="Maf"/>
    <property type="match status" value="1"/>
</dbReference>
<dbReference type="SUPFAM" id="SSF52972">
    <property type="entry name" value="ITPase-like"/>
    <property type="match status" value="1"/>
</dbReference>